<organism>
    <name type="scientific">Escherichia coli (strain K12)</name>
    <dbReference type="NCBI Taxonomy" id="83333"/>
    <lineage>
        <taxon>Bacteria</taxon>
        <taxon>Pseudomonadati</taxon>
        <taxon>Pseudomonadota</taxon>
        <taxon>Gammaproteobacteria</taxon>
        <taxon>Enterobacterales</taxon>
        <taxon>Enterobacteriaceae</taxon>
        <taxon>Escherichia</taxon>
    </lineage>
</organism>
<protein>
    <recommendedName>
        <fullName>p-aminobenzoyl-glutamate hydrolase subunit B</fullName>
        <ecNumber>3.5.1.-</ecNumber>
    </recommendedName>
    <alternativeName>
        <fullName>PABA-GLU hydrolase</fullName>
        <shortName>PGH</shortName>
    </alternativeName>
</protein>
<comment type="function">
    <text evidence="1 2">Component of the p-aminobenzoyl-glutamate hydrolase multicomponent enzyme system which catalyzes the cleavage of p-aminobenzoyl-glutamate (PABA-GLU) to form p-aminobenzoate (PABA) and glutamate. AbgAB does not degrade dipeptides and the physiological role of abgABT should be clarified.</text>
</comment>
<comment type="cofactor">
    <cofactor evidence="2">
        <name>Mn(2+)</name>
        <dbReference type="ChEBI" id="CHEBI:29035"/>
    </cofactor>
</comment>
<comment type="biophysicochemical properties">
    <kinetics>
        <KM evidence="2">60 uM for PABA-GLU (at pH 8.5)</KM>
    </kinetics>
</comment>
<comment type="subunit">
    <text evidence="2">Forms a heterodimer with AbgA.</text>
</comment>
<comment type="interaction">
    <interactant intactId="EBI-1123629">
        <id>P76052</id>
    </interactant>
    <interactant intactId="EBI-9155452">
        <id>P77357</id>
        <label>abgA</label>
    </interactant>
    <organismsDiffer>false</organismsDiffer>
    <experiments>2</experiments>
</comment>
<comment type="induction">
    <text evidence="3">Could be transcriptionally regulated by AbgR.</text>
</comment>
<keyword id="KW-0903">Direct protein sequencing</keyword>
<keyword id="KW-0378">Hydrolase</keyword>
<keyword id="KW-1185">Reference proteome</keyword>
<dbReference type="EC" id="3.5.1.-"/>
<dbReference type="EMBL" id="U00096">
    <property type="protein sequence ID" value="AAC74419.1"/>
    <property type="molecule type" value="Genomic_DNA"/>
</dbReference>
<dbReference type="EMBL" id="AP009048">
    <property type="protein sequence ID" value="BAE76404.1"/>
    <property type="molecule type" value="Genomic_DNA"/>
</dbReference>
<dbReference type="PIR" id="D64883">
    <property type="entry name" value="D64883"/>
</dbReference>
<dbReference type="RefSeq" id="NP_415853.1">
    <property type="nucleotide sequence ID" value="NC_000913.3"/>
</dbReference>
<dbReference type="RefSeq" id="WP_001156451.1">
    <property type="nucleotide sequence ID" value="NZ_SSZK01000012.1"/>
</dbReference>
<dbReference type="SMR" id="P76052"/>
<dbReference type="BioGRID" id="4260157">
    <property type="interactions" value="69"/>
</dbReference>
<dbReference type="ComplexPortal" id="CPX-28">
    <property type="entry name" value="p-aminobenzoyl-glutamate hydrolase complex"/>
</dbReference>
<dbReference type="FunCoup" id="P76052">
    <property type="interactions" value="256"/>
</dbReference>
<dbReference type="IntAct" id="P76052">
    <property type="interactions" value="6"/>
</dbReference>
<dbReference type="STRING" id="511145.b1337"/>
<dbReference type="PaxDb" id="511145-b1337"/>
<dbReference type="EnsemblBacteria" id="AAC74419">
    <property type="protein sequence ID" value="AAC74419"/>
    <property type="gene ID" value="b1337"/>
</dbReference>
<dbReference type="GeneID" id="945950"/>
<dbReference type="KEGG" id="ecj:JW1331"/>
<dbReference type="KEGG" id="eco:b1337"/>
<dbReference type="KEGG" id="ecoc:C3026_07830"/>
<dbReference type="PATRIC" id="fig|1411691.4.peg.940"/>
<dbReference type="EchoBASE" id="EB3134"/>
<dbReference type="eggNOG" id="COG1473">
    <property type="taxonomic scope" value="Bacteria"/>
</dbReference>
<dbReference type="HOGENOM" id="CLU_031812_0_1_6"/>
<dbReference type="InParanoid" id="P76052"/>
<dbReference type="OMA" id="HYAITDT"/>
<dbReference type="OrthoDB" id="9781032at2"/>
<dbReference type="PhylomeDB" id="P76052"/>
<dbReference type="BioCyc" id="EcoCyc:G6669-MONOMER"/>
<dbReference type="BioCyc" id="MetaCyc:G6669-MONOMER"/>
<dbReference type="SABIO-RK" id="P76052"/>
<dbReference type="PRO" id="PR:P76052"/>
<dbReference type="Proteomes" id="UP000000625">
    <property type="component" value="Chromosome"/>
</dbReference>
<dbReference type="GO" id="GO:1902494">
    <property type="term" value="C:catalytic complex"/>
    <property type="evidence" value="ECO:0000353"/>
    <property type="project" value="ComplexPortal"/>
</dbReference>
<dbReference type="GO" id="GO:0005737">
    <property type="term" value="C:cytoplasm"/>
    <property type="evidence" value="ECO:0000314"/>
    <property type="project" value="EcoliWiki"/>
</dbReference>
<dbReference type="GO" id="GO:0016805">
    <property type="term" value="F:dipeptidase activity"/>
    <property type="evidence" value="ECO:0000318"/>
    <property type="project" value="GO_Central"/>
</dbReference>
<dbReference type="GO" id="GO:0071713">
    <property type="term" value="F:para-aminobenzoyl-glutamate hydrolase activity"/>
    <property type="evidence" value="ECO:0000314"/>
    <property type="project" value="UniProtKB"/>
</dbReference>
<dbReference type="GO" id="GO:0046982">
    <property type="term" value="F:protein heterodimerization activity"/>
    <property type="evidence" value="ECO:0000353"/>
    <property type="project" value="EcoliWiki"/>
</dbReference>
<dbReference type="GO" id="GO:0046657">
    <property type="term" value="P:folic acid catabolic process"/>
    <property type="evidence" value="ECO:0000314"/>
    <property type="project" value="ComplexPortal"/>
</dbReference>
<dbReference type="CDD" id="cd05673">
    <property type="entry name" value="M20_Acy1L2_AbgB"/>
    <property type="match status" value="1"/>
</dbReference>
<dbReference type="FunFam" id="3.40.630.10:FF:000061">
    <property type="entry name" value="Aminobenzoyl-glutamate utilization protein B"/>
    <property type="match status" value="1"/>
</dbReference>
<dbReference type="FunFam" id="3.30.70.360:FF:000004">
    <property type="entry name" value="Peptidase M20 domain-containing protein 2"/>
    <property type="match status" value="1"/>
</dbReference>
<dbReference type="Gene3D" id="3.30.70.360">
    <property type="match status" value="1"/>
</dbReference>
<dbReference type="Gene3D" id="3.40.630.10">
    <property type="entry name" value="Zn peptidases"/>
    <property type="match status" value="1"/>
</dbReference>
<dbReference type="InterPro" id="IPR017439">
    <property type="entry name" value="Amidohydrolase"/>
</dbReference>
<dbReference type="InterPro" id="IPR017145">
    <property type="entry name" value="Aminobenzoyl-glu_utiliz_pB"/>
</dbReference>
<dbReference type="InterPro" id="IPR036264">
    <property type="entry name" value="Bact_exopeptidase_dim_dom"/>
</dbReference>
<dbReference type="InterPro" id="IPR002933">
    <property type="entry name" value="Peptidase_M20"/>
</dbReference>
<dbReference type="InterPro" id="IPR052030">
    <property type="entry name" value="Peptidase_M20/M20A_hydrolases"/>
</dbReference>
<dbReference type="InterPro" id="IPR011650">
    <property type="entry name" value="Peptidase_M20_dimer"/>
</dbReference>
<dbReference type="NCBIfam" id="TIGR01891">
    <property type="entry name" value="amidohydrolases"/>
    <property type="match status" value="1"/>
</dbReference>
<dbReference type="PANTHER" id="PTHR30575">
    <property type="entry name" value="PEPTIDASE M20"/>
    <property type="match status" value="1"/>
</dbReference>
<dbReference type="PANTHER" id="PTHR30575:SF0">
    <property type="entry name" value="XAA-ARG DIPEPTIDASE"/>
    <property type="match status" value="1"/>
</dbReference>
<dbReference type="Pfam" id="PF07687">
    <property type="entry name" value="M20_dimer"/>
    <property type="match status" value="1"/>
</dbReference>
<dbReference type="Pfam" id="PF01546">
    <property type="entry name" value="Peptidase_M20"/>
    <property type="match status" value="1"/>
</dbReference>
<dbReference type="PIRSF" id="PIRSF037227">
    <property type="entry name" value="Aminobenzoyl-glu_utiliz_pB"/>
    <property type="match status" value="1"/>
</dbReference>
<dbReference type="SUPFAM" id="SSF55031">
    <property type="entry name" value="Bacterial exopeptidase dimerisation domain"/>
    <property type="match status" value="1"/>
</dbReference>
<dbReference type="SUPFAM" id="SSF53187">
    <property type="entry name" value="Zn-dependent exopeptidases"/>
    <property type="match status" value="1"/>
</dbReference>
<name>ABGB_ECOLI</name>
<proteinExistence type="evidence at protein level"/>
<gene>
    <name type="primary">abgB</name>
    <name type="synonym">ydaI</name>
    <name type="ordered locus">b1337</name>
    <name type="ordered locus">JW1331</name>
    <name type="ORF">ECK1333</name>
</gene>
<feature type="chain" id="PRO_0000064421" description="p-aminobenzoyl-glutamate hydrolase subunit B">
    <location>
        <begin position="1"/>
        <end position="481"/>
    </location>
</feature>
<accession>P76052</accession>
<accession>Q2MBF2</accession>
<sequence length="481" mass="52194">MQEIYRFIDDAIEADRQRYTDIADQIWDHPETRFEEFWSAEHLASALESAGFTVTRNVGNIPNAFIASFGQGKPVIALLGEYDALAGLSQQAGCAQPTSVTPGENGHGCGHNLLGTAAFAAAIAVKKWLEQYGQGGTVRFYGCPGEEGGSGKTFMVREGVFDDVDAALTWHPEAFAGMFNTRTLANIQASWRFKGIAAHAANSPHLGRSALDAVTLMTTGTNFLNEHIIEKARVHYAITNSGGISPNVVQAQAEVLYLIRAPEMTDVQHIYDRVAKIAEGAALMTETTVECRFDKACSSYLPNRTLENAMYQALSHFGTPEWNSEELAFAKQIQATLTSNDRQNSLNNIAATGGENGKVFALRHRETVLANEVAPYAATDNVLAASTDVGDVSWKLPVAQCFSPCFAVGTPLHTWQLVSQGRTSIAHKGMLLAAKTMAATTVNLFLDSGLLQECQQEHQQVTDTQPYHCPIPKNVTPSPLK</sequence>
<evidence type="ECO:0000269" key="1">
    <source>
    </source>
</evidence>
<evidence type="ECO:0000269" key="2">
    <source>
    </source>
</evidence>
<evidence type="ECO:0000269" key="3">
    <source>
    </source>
</evidence>
<reference key="1">
    <citation type="journal article" date="1997" name="Science">
        <title>The complete genome sequence of Escherichia coli K-12.</title>
        <authorList>
            <person name="Blattner F.R."/>
            <person name="Plunkett G. III"/>
            <person name="Bloch C.A."/>
            <person name="Perna N.T."/>
            <person name="Burland V."/>
            <person name="Riley M."/>
            <person name="Collado-Vides J."/>
            <person name="Glasner J.D."/>
            <person name="Rode C.K."/>
            <person name="Mayhew G.F."/>
            <person name="Gregor J."/>
            <person name="Davis N.W."/>
            <person name="Kirkpatrick H.A."/>
            <person name="Goeden M.A."/>
            <person name="Rose D.J."/>
            <person name="Mau B."/>
            <person name="Shao Y."/>
        </authorList>
    </citation>
    <scope>NUCLEOTIDE SEQUENCE [LARGE SCALE GENOMIC DNA]</scope>
    <source>
        <strain>K12 / MG1655 / ATCC 47076</strain>
    </source>
</reference>
<reference key="2">
    <citation type="journal article" date="2006" name="Mol. Syst. Biol.">
        <title>Highly accurate genome sequences of Escherichia coli K-12 strains MG1655 and W3110.</title>
        <authorList>
            <person name="Hayashi K."/>
            <person name="Morooka N."/>
            <person name="Yamamoto Y."/>
            <person name="Fujita K."/>
            <person name="Isono K."/>
            <person name="Choi S."/>
            <person name="Ohtsubo E."/>
            <person name="Baba T."/>
            <person name="Wanner B.L."/>
            <person name="Mori H."/>
            <person name="Horiuchi T."/>
        </authorList>
    </citation>
    <scope>NUCLEOTIDE SEQUENCE [LARGE SCALE GENOMIC DNA]</scope>
    <source>
        <strain>K12 / W3110 / ATCC 27325 / DSM 5911</strain>
    </source>
</reference>
<reference key="3">
    <citation type="journal article" date="2010" name="J. Bacteriol.">
        <title>Purification and characterization of the folate catabolic enzyme p-aminobenzoyl-glutamate hydrolase from Escherichia coli.</title>
        <authorList>
            <person name="Green J.M."/>
            <person name="Hollandsworth R."/>
            <person name="Pitstick L."/>
            <person name="Carter E.L."/>
        </authorList>
    </citation>
    <scope>PROTEIN SEQUENCE OF 1-10</scope>
    <scope>FUNCTION AS A PABA-GLU HYDROLASE</scope>
    <scope>BIOPHYSICOCHEMICAL PROPERTIES</scope>
    <scope>SUBUNIT</scope>
    <scope>COFACTOR</scope>
</reference>
<reference key="4">
    <citation type="journal article" date="1998" name="J. Bacteriol.">
        <title>Characterization of mutations that allow p-aminobenzoyl-glutamate utilization by Escherichia coli.</title>
        <authorList>
            <person name="Hussein M.J."/>
            <person name="Green J.M."/>
            <person name="Nichols B.P."/>
        </authorList>
    </citation>
    <scope>INDUCTION</scope>
</reference>
<reference key="5">
    <citation type="journal article" date="2007" name="J. Bacteriol.">
        <title>Escherichia coli abg genes enable uptake and cleavage of the folate catabolite p-aminobenzoyl-glutamate.</title>
        <authorList>
            <person name="Carter E.L."/>
            <person name="Jager L."/>
            <person name="Gardner L."/>
            <person name="Hall C.C."/>
            <person name="Willis S."/>
            <person name="Green J.M."/>
        </authorList>
    </citation>
    <scope>FUNCTION AS A PABA-GLU HYDROLASE</scope>
</reference>